<evidence type="ECO:0000250" key="1"/>
<evidence type="ECO:0000250" key="2">
    <source>
        <dbReference type="UniProtKB" id="O35867"/>
    </source>
</evidence>
<evidence type="ECO:0000255" key="3"/>
<evidence type="ECO:0000255" key="4">
    <source>
        <dbReference type="PROSITE-ProRule" id="PRU00143"/>
    </source>
</evidence>
<evidence type="ECO:0000255" key="5">
    <source>
        <dbReference type="PROSITE-ProRule" id="PRU00184"/>
    </source>
</evidence>
<evidence type="ECO:0000256" key="6">
    <source>
        <dbReference type="SAM" id="MobiDB-lite"/>
    </source>
</evidence>
<evidence type="ECO:0000269" key="7">
    <source>
    </source>
</evidence>
<evidence type="ECO:0000303" key="8">
    <source>
    </source>
</evidence>
<evidence type="ECO:0000303" key="9">
    <source>
    </source>
</evidence>
<evidence type="ECO:0000305" key="10"/>
<evidence type="ECO:0007744" key="11">
    <source>
    </source>
</evidence>
<evidence type="ECO:0007744" key="12">
    <source>
    </source>
</evidence>
<evidence type="ECO:0007744" key="13">
    <source>
    </source>
</evidence>
<evidence type="ECO:0007829" key="14">
    <source>
        <dbReference type="PDB" id="1WF8"/>
    </source>
</evidence>
<gene>
    <name type="primary">PPP1R9A</name>
    <name type="synonym">KIAA1222</name>
</gene>
<proteinExistence type="evidence at protein level"/>
<organism>
    <name type="scientific">Homo sapiens</name>
    <name type="common">Human</name>
    <dbReference type="NCBI Taxonomy" id="9606"/>
    <lineage>
        <taxon>Eukaryota</taxon>
        <taxon>Metazoa</taxon>
        <taxon>Chordata</taxon>
        <taxon>Craniata</taxon>
        <taxon>Vertebrata</taxon>
        <taxon>Euteleostomi</taxon>
        <taxon>Mammalia</taxon>
        <taxon>Eutheria</taxon>
        <taxon>Euarchontoglires</taxon>
        <taxon>Primates</taxon>
        <taxon>Haplorrhini</taxon>
        <taxon>Catarrhini</taxon>
        <taxon>Hominidae</taxon>
        <taxon>Homo</taxon>
    </lineage>
</organism>
<dbReference type="EMBL" id="AK000075">
    <property type="protein sequence ID" value="BAA90928.1"/>
    <property type="molecule type" value="mRNA"/>
</dbReference>
<dbReference type="EMBL" id="AC002429">
    <property type="status" value="NOT_ANNOTATED_CDS"/>
    <property type="molecule type" value="Genomic_DNA"/>
</dbReference>
<dbReference type="EMBL" id="AC004022">
    <property type="protein sequence ID" value="AAC35294.2"/>
    <property type="molecule type" value="Genomic_DNA"/>
</dbReference>
<dbReference type="EMBL" id="AC073886">
    <property type="status" value="NOT_ANNOTATED_CDS"/>
    <property type="molecule type" value="Genomic_DNA"/>
</dbReference>
<dbReference type="EMBL" id="AC073890">
    <property type="status" value="NOT_ANNOTATED_CDS"/>
    <property type="molecule type" value="Genomic_DNA"/>
</dbReference>
<dbReference type="EMBL" id="BC130449">
    <property type="protein sequence ID" value="AAI30450.1"/>
    <property type="molecule type" value="mRNA"/>
</dbReference>
<dbReference type="EMBL" id="BC150636">
    <property type="protein sequence ID" value="AAI50637.1"/>
    <property type="molecule type" value="mRNA"/>
</dbReference>
<dbReference type="EMBL" id="AB033048">
    <property type="protein sequence ID" value="BAA86536.1"/>
    <property type="molecule type" value="mRNA"/>
</dbReference>
<dbReference type="CCDS" id="CCDS34683.1">
    <molecule id="Q9ULJ8-1"/>
</dbReference>
<dbReference type="CCDS" id="CCDS55127.1">
    <molecule id="Q9ULJ8-3"/>
</dbReference>
<dbReference type="CCDS" id="CCDS55128.1">
    <molecule id="Q9ULJ8-4"/>
</dbReference>
<dbReference type="CCDS" id="CCDS55129.1">
    <molecule id="Q9ULJ8-5"/>
</dbReference>
<dbReference type="RefSeq" id="NP_001159632.1">
    <molecule id="Q9ULJ8-3"/>
    <property type="nucleotide sequence ID" value="NM_001166160.2"/>
</dbReference>
<dbReference type="RefSeq" id="NP_001159633.1">
    <molecule id="Q9ULJ8-5"/>
    <property type="nucleotide sequence ID" value="NM_001166161.1"/>
</dbReference>
<dbReference type="RefSeq" id="NP_001159634.1">
    <molecule id="Q9ULJ8-4"/>
    <property type="nucleotide sequence ID" value="NM_001166162.1"/>
</dbReference>
<dbReference type="RefSeq" id="NP_001159635.1">
    <property type="nucleotide sequence ID" value="NM_001166163.1"/>
</dbReference>
<dbReference type="RefSeq" id="NP_060120.2">
    <molecule id="Q9ULJ8-1"/>
    <property type="nucleotide sequence ID" value="NM_017650.2"/>
</dbReference>
<dbReference type="RefSeq" id="XP_016867892.1">
    <molecule id="Q9ULJ8-5"/>
    <property type="nucleotide sequence ID" value="XM_017012403.2"/>
</dbReference>
<dbReference type="RefSeq" id="XP_016867894.1">
    <molecule id="Q9ULJ8-1"/>
    <property type="nucleotide sequence ID" value="XM_017012405.2"/>
</dbReference>
<dbReference type="RefSeq" id="XP_016867895.1">
    <molecule id="Q9ULJ8-1"/>
    <property type="nucleotide sequence ID" value="XM_017012406.2"/>
</dbReference>
<dbReference type="RefSeq" id="XP_047276548.1">
    <molecule id="Q9ULJ8-5"/>
    <property type="nucleotide sequence ID" value="XM_047420592.1"/>
</dbReference>
<dbReference type="RefSeq" id="XP_054214586.1">
    <molecule id="Q9ULJ8-5"/>
    <property type="nucleotide sequence ID" value="XM_054358611.1"/>
</dbReference>
<dbReference type="RefSeq" id="XP_054214587.1">
    <molecule id="Q9ULJ8-5"/>
    <property type="nucleotide sequence ID" value="XM_054358612.1"/>
</dbReference>
<dbReference type="RefSeq" id="XP_054214590.1">
    <molecule id="Q9ULJ8-1"/>
    <property type="nucleotide sequence ID" value="XM_054358615.1"/>
</dbReference>
<dbReference type="RefSeq" id="XP_054214591.1">
    <molecule id="Q9ULJ8-1"/>
    <property type="nucleotide sequence ID" value="XM_054358616.1"/>
</dbReference>
<dbReference type="PDB" id="1WF8">
    <property type="method" value="NMR"/>
    <property type="chains" value="A=500-593"/>
</dbReference>
<dbReference type="PDBsum" id="1WF8"/>
<dbReference type="BMRB" id="Q9ULJ8"/>
<dbReference type="SMR" id="Q9ULJ8"/>
<dbReference type="BioGRID" id="120747">
    <property type="interactions" value="134"/>
</dbReference>
<dbReference type="FunCoup" id="Q9ULJ8">
    <property type="interactions" value="996"/>
</dbReference>
<dbReference type="IntAct" id="Q9ULJ8">
    <property type="interactions" value="76"/>
</dbReference>
<dbReference type="MINT" id="Q9ULJ8"/>
<dbReference type="STRING" id="9606.ENSP00000405514"/>
<dbReference type="GlyGen" id="Q9ULJ8">
    <property type="glycosylation" value="2 sites, 1 O-linked glycan (1 site)"/>
</dbReference>
<dbReference type="iPTMnet" id="Q9ULJ8"/>
<dbReference type="PhosphoSitePlus" id="Q9ULJ8"/>
<dbReference type="BioMuta" id="PPP1R9A"/>
<dbReference type="DMDM" id="50403806"/>
<dbReference type="jPOST" id="Q9ULJ8"/>
<dbReference type="MassIVE" id="Q9ULJ8"/>
<dbReference type="PeptideAtlas" id="Q9ULJ8"/>
<dbReference type="ProteomicsDB" id="19462"/>
<dbReference type="ProteomicsDB" id="19765"/>
<dbReference type="ProteomicsDB" id="29959"/>
<dbReference type="ProteomicsDB" id="85051">
    <molecule id="Q9ULJ8-1"/>
</dbReference>
<dbReference type="ProteomicsDB" id="85052">
    <molecule id="Q9ULJ8-2"/>
</dbReference>
<dbReference type="Pumba" id="Q9ULJ8"/>
<dbReference type="Antibodypedia" id="4361">
    <property type="antibodies" value="147 antibodies from 27 providers"/>
</dbReference>
<dbReference type="DNASU" id="55607"/>
<dbReference type="Ensembl" id="ENST00000289495.7">
    <molecule id="Q9ULJ8-5"/>
    <property type="protein sequence ID" value="ENSP00000289495.7"/>
    <property type="gene ID" value="ENSG00000158528.12"/>
</dbReference>
<dbReference type="Ensembl" id="ENST00000340694.8">
    <molecule id="Q9ULJ8-1"/>
    <property type="protein sequence ID" value="ENSP00000344524.4"/>
    <property type="gene ID" value="ENSG00000158528.12"/>
</dbReference>
<dbReference type="Ensembl" id="ENST00000424654.5">
    <molecule id="Q9ULJ8-4"/>
    <property type="protein sequence ID" value="ENSP00000411342.1"/>
    <property type="gene ID" value="ENSG00000158528.12"/>
</dbReference>
<dbReference type="Ensembl" id="ENST00000433360.6">
    <molecule id="Q9ULJ8-3"/>
    <property type="protein sequence ID" value="ENSP00000405514.1"/>
    <property type="gene ID" value="ENSG00000158528.12"/>
</dbReference>
<dbReference type="Ensembl" id="ENST00000433881.5">
    <molecule id="Q9ULJ8-1"/>
    <property type="protein sequence ID" value="ENSP00000398870.1"/>
    <property type="gene ID" value="ENSG00000158528.12"/>
</dbReference>
<dbReference type="Ensembl" id="ENST00000456331.6">
    <molecule id="Q9ULJ8-4"/>
    <property type="protein sequence ID" value="ENSP00000402893.2"/>
    <property type="gene ID" value="ENSG00000158528.12"/>
</dbReference>
<dbReference type="GeneID" id="55607"/>
<dbReference type="KEGG" id="hsa:55607"/>
<dbReference type="MANE-Select" id="ENST00000433360.6">
    <molecule id="Q9ULJ8-3"/>
    <property type="protein sequence ID" value="ENSP00000405514.1"/>
    <property type="RefSeq nucleotide sequence ID" value="NM_001166160.2"/>
    <property type="RefSeq protein sequence ID" value="NP_001159632.1"/>
</dbReference>
<dbReference type="UCSC" id="uc003unp.5">
    <molecule id="Q9ULJ8-1"/>
    <property type="organism name" value="human"/>
</dbReference>
<dbReference type="AGR" id="HGNC:14946"/>
<dbReference type="CTD" id="55607"/>
<dbReference type="DisGeNET" id="55607"/>
<dbReference type="GeneCards" id="PPP1R9A"/>
<dbReference type="HGNC" id="HGNC:14946">
    <property type="gene designation" value="PPP1R9A"/>
</dbReference>
<dbReference type="HPA" id="ENSG00000158528">
    <property type="expression patterns" value="Low tissue specificity"/>
</dbReference>
<dbReference type="MIM" id="602468">
    <property type="type" value="gene"/>
</dbReference>
<dbReference type="neXtProt" id="NX_Q9ULJ8"/>
<dbReference type="OpenTargets" id="ENSG00000158528"/>
<dbReference type="PharmGKB" id="PA33661"/>
<dbReference type="VEuPathDB" id="HostDB:ENSG00000158528"/>
<dbReference type="eggNOG" id="KOG1945">
    <property type="taxonomic scope" value="Eukaryota"/>
</dbReference>
<dbReference type="GeneTree" id="ENSGT00940000155538"/>
<dbReference type="HOGENOM" id="CLU_007401_0_0_1"/>
<dbReference type="InParanoid" id="Q9ULJ8"/>
<dbReference type="OMA" id="CPDGLSQ"/>
<dbReference type="OrthoDB" id="62701at2759"/>
<dbReference type="PAN-GO" id="Q9ULJ8">
    <property type="GO annotations" value="8 GO annotations based on evolutionary models"/>
</dbReference>
<dbReference type="PhylomeDB" id="Q9ULJ8"/>
<dbReference type="TreeFam" id="TF105540"/>
<dbReference type="PathwayCommons" id="Q9ULJ8"/>
<dbReference type="SignaLink" id="Q9ULJ8"/>
<dbReference type="SIGNOR" id="Q9ULJ8"/>
<dbReference type="BioGRID-ORCS" id="55607">
    <property type="hits" value="8 hits in 1146 CRISPR screens"/>
</dbReference>
<dbReference type="CD-CODE" id="FB4E32DD">
    <property type="entry name" value="Presynaptic clusters and postsynaptic densities"/>
</dbReference>
<dbReference type="ChiTaRS" id="PPP1R9A">
    <property type="organism name" value="human"/>
</dbReference>
<dbReference type="EvolutionaryTrace" id="Q9ULJ8"/>
<dbReference type="GeneWiki" id="PPP1R9A"/>
<dbReference type="GenomeRNAi" id="55607"/>
<dbReference type="Pharos" id="Q9ULJ8">
    <property type="development level" value="Tbio"/>
</dbReference>
<dbReference type="PRO" id="PR:Q9ULJ8"/>
<dbReference type="Proteomes" id="UP000005640">
    <property type="component" value="Chromosome 7"/>
</dbReference>
<dbReference type="RNAct" id="Q9ULJ8">
    <property type="molecule type" value="protein"/>
</dbReference>
<dbReference type="Bgee" id="ENSG00000158528">
    <property type="expression patterns" value="Expressed in Brodmann (1909) area 23 and 188 other cell types or tissues"/>
</dbReference>
<dbReference type="ExpressionAtlas" id="Q9ULJ8">
    <property type="expression patterns" value="baseline and differential"/>
</dbReference>
<dbReference type="GO" id="GO:0015629">
    <property type="term" value="C:actin cytoskeleton"/>
    <property type="evidence" value="ECO:0000318"/>
    <property type="project" value="GO_Central"/>
</dbReference>
<dbReference type="GO" id="GO:0030864">
    <property type="term" value="C:cortical actin cytoskeleton"/>
    <property type="evidence" value="ECO:0007669"/>
    <property type="project" value="Ensembl"/>
</dbReference>
<dbReference type="GO" id="GO:0005737">
    <property type="term" value="C:cytoplasm"/>
    <property type="evidence" value="ECO:0000318"/>
    <property type="project" value="GO_Central"/>
</dbReference>
<dbReference type="GO" id="GO:0030425">
    <property type="term" value="C:dendrite"/>
    <property type="evidence" value="ECO:0000318"/>
    <property type="project" value="GO_Central"/>
</dbReference>
<dbReference type="GO" id="GO:0043197">
    <property type="term" value="C:dendritic spine"/>
    <property type="evidence" value="ECO:0007669"/>
    <property type="project" value="Ensembl"/>
</dbReference>
<dbReference type="GO" id="GO:0030175">
    <property type="term" value="C:filopodium"/>
    <property type="evidence" value="ECO:0007669"/>
    <property type="project" value="Ensembl"/>
</dbReference>
<dbReference type="GO" id="GO:0014069">
    <property type="term" value="C:postsynaptic density"/>
    <property type="evidence" value="ECO:0000318"/>
    <property type="project" value="GO_Central"/>
</dbReference>
<dbReference type="GO" id="GO:0051015">
    <property type="term" value="F:actin filament binding"/>
    <property type="evidence" value="ECO:0000318"/>
    <property type="project" value="GO_Central"/>
</dbReference>
<dbReference type="GO" id="GO:0007015">
    <property type="term" value="P:actin filament organization"/>
    <property type="evidence" value="ECO:0000318"/>
    <property type="project" value="GO_Central"/>
</dbReference>
<dbReference type="GO" id="GO:0019722">
    <property type="term" value="P:calcium-mediated signaling"/>
    <property type="evidence" value="ECO:0000318"/>
    <property type="project" value="GO_Central"/>
</dbReference>
<dbReference type="GO" id="GO:0050804">
    <property type="term" value="P:modulation of chemical synaptic transmission"/>
    <property type="evidence" value="ECO:0007669"/>
    <property type="project" value="Ensembl"/>
</dbReference>
<dbReference type="GO" id="GO:0031175">
    <property type="term" value="P:neuron projection development"/>
    <property type="evidence" value="ECO:0000318"/>
    <property type="project" value="GO_Central"/>
</dbReference>
<dbReference type="CDD" id="cd06790">
    <property type="entry name" value="PDZ_neurabin-like"/>
    <property type="match status" value="1"/>
</dbReference>
<dbReference type="CDD" id="cd09512">
    <property type="entry name" value="SAM_Neurabin-like"/>
    <property type="match status" value="1"/>
</dbReference>
<dbReference type="FunFam" id="2.30.42.10:FF:000010">
    <property type="entry name" value="Neurabin-1 isoform 1"/>
    <property type="match status" value="1"/>
</dbReference>
<dbReference type="FunFam" id="1.10.150.50:FF:000008">
    <property type="entry name" value="Neurabin-1 isoform 1-like protein"/>
    <property type="match status" value="1"/>
</dbReference>
<dbReference type="Gene3D" id="2.30.42.10">
    <property type="match status" value="1"/>
</dbReference>
<dbReference type="Gene3D" id="1.10.150.50">
    <property type="entry name" value="Transcription Factor, Ets-1"/>
    <property type="match status" value="1"/>
</dbReference>
<dbReference type="InterPro" id="IPR040645">
    <property type="entry name" value="Neurabin-1/2_PDZ"/>
</dbReference>
<dbReference type="InterPro" id="IPR043446">
    <property type="entry name" value="Neurabin-like"/>
</dbReference>
<dbReference type="InterPro" id="IPR001478">
    <property type="entry name" value="PDZ"/>
</dbReference>
<dbReference type="InterPro" id="IPR036034">
    <property type="entry name" value="PDZ_sf"/>
</dbReference>
<dbReference type="InterPro" id="IPR001660">
    <property type="entry name" value="SAM"/>
</dbReference>
<dbReference type="InterPro" id="IPR013761">
    <property type="entry name" value="SAM/pointed_sf"/>
</dbReference>
<dbReference type="PANTHER" id="PTHR16154">
    <property type="entry name" value="NEURABIN"/>
    <property type="match status" value="1"/>
</dbReference>
<dbReference type="PANTHER" id="PTHR16154:SF22">
    <property type="entry name" value="NEURABIN-1"/>
    <property type="match status" value="1"/>
</dbReference>
<dbReference type="Pfam" id="PF00595">
    <property type="entry name" value="PDZ"/>
    <property type="match status" value="1"/>
</dbReference>
<dbReference type="Pfam" id="PF17817">
    <property type="entry name" value="PDZ_5"/>
    <property type="match status" value="1"/>
</dbReference>
<dbReference type="Pfam" id="PF07647">
    <property type="entry name" value="SAM_2"/>
    <property type="match status" value="1"/>
</dbReference>
<dbReference type="SMART" id="SM00228">
    <property type="entry name" value="PDZ"/>
    <property type="match status" value="1"/>
</dbReference>
<dbReference type="SMART" id="SM00454">
    <property type="entry name" value="SAM"/>
    <property type="match status" value="1"/>
</dbReference>
<dbReference type="SUPFAM" id="SSF50156">
    <property type="entry name" value="PDZ domain-like"/>
    <property type="match status" value="1"/>
</dbReference>
<dbReference type="SUPFAM" id="SSF47769">
    <property type="entry name" value="SAM/Pointed domain"/>
    <property type="match status" value="1"/>
</dbReference>
<dbReference type="PROSITE" id="PS50106">
    <property type="entry name" value="PDZ"/>
    <property type="match status" value="1"/>
</dbReference>
<dbReference type="PROSITE" id="PS50105">
    <property type="entry name" value="SAM_DOMAIN"/>
    <property type="match status" value="1"/>
</dbReference>
<keyword id="KW-0002">3D-structure</keyword>
<keyword id="KW-0009">Actin-binding</keyword>
<keyword id="KW-0025">Alternative splicing</keyword>
<keyword id="KW-0175">Coiled coil</keyword>
<keyword id="KW-0963">Cytoplasm</keyword>
<keyword id="KW-0206">Cytoskeleton</keyword>
<keyword id="KW-0217">Developmental protein</keyword>
<keyword id="KW-0221">Differentiation</keyword>
<keyword id="KW-0524">Neurogenesis</keyword>
<keyword id="KW-0597">Phosphoprotein</keyword>
<keyword id="KW-1267">Proteomics identification</keyword>
<keyword id="KW-1185">Reference proteome</keyword>
<keyword id="KW-0770">Synapse</keyword>
<keyword id="KW-0771">Synaptosome</keyword>
<accession>Q9ULJ8</accession>
<accession>A1L494</accession>
<accession>B2RWQ1</accession>
<accession>E9PCA0</accession>
<accession>E9PCK6</accession>
<accession>E9PDX1</accession>
<accession>F8W7J9</accession>
<accession>O76059</accession>
<accession>Q9NXT2</accession>
<feature type="chain" id="PRO_0000071507" description="Neurabin-1">
    <location>
        <begin position="1"/>
        <end position="1098"/>
    </location>
</feature>
<feature type="domain" description="PDZ" evidence="4">
    <location>
        <begin position="504"/>
        <end position="592"/>
    </location>
</feature>
<feature type="domain" description="SAM" evidence="5">
    <location>
        <begin position="988"/>
        <end position="1051"/>
    </location>
</feature>
<feature type="region of interest" description="Actin-binding">
    <location>
        <begin position="1"/>
        <end position="144"/>
    </location>
</feature>
<feature type="region of interest" description="Disordered" evidence="6">
    <location>
        <begin position="1"/>
        <end position="66"/>
    </location>
</feature>
<feature type="region of interest" description="Disordered" evidence="6">
    <location>
        <begin position="87"/>
        <end position="117"/>
    </location>
</feature>
<feature type="region of interest" description="Disordered" evidence="6">
    <location>
        <begin position="147"/>
        <end position="213"/>
    </location>
</feature>
<feature type="region of interest" description="Disordered" evidence="6">
    <location>
        <begin position="251"/>
        <end position="395"/>
    </location>
</feature>
<feature type="region of interest" description="Interaction with protein phosphatase 1" evidence="1">
    <location>
        <begin position="425"/>
        <end position="502"/>
    </location>
</feature>
<feature type="region of interest" description="Interaction with TGN38" evidence="1">
    <location>
        <begin position="597"/>
        <end position="1090"/>
    </location>
</feature>
<feature type="region of interest" description="Disordered" evidence="6">
    <location>
        <begin position="627"/>
        <end position="647"/>
    </location>
</feature>
<feature type="region of interest" description="Disordered" evidence="6">
    <location>
        <begin position="839"/>
        <end position="865"/>
    </location>
</feature>
<feature type="region of interest" description="Disordered" evidence="6">
    <location>
        <begin position="888"/>
        <end position="952"/>
    </location>
</feature>
<feature type="region of interest" description="Disordered" evidence="6">
    <location>
        <begin position="1051"/>
        <end position="1098"/>
    </location>
</feature>
<feature type="coiled-coil region" evidence="3">
    <location>
        <begin position="597"/>
        <end position="627"/>
    </location>
</feature>
<feature type="coiled-coil region" evidence="3">
    <location>
        <begin position="670"/>
        <end position="824"/>
    </location>
</feature>
<feature type="coiled-coil region" evidence="3">
    <location>
        <begin position="1033"/>
        <end position="1090"/>
    </location>
</feature>
<feature type="compositionally biased region" description="Basic and acidic residues" evidence="6">
    <location>
        <begin position="1"/>
        <end position="12"/>
    </location>
</feature>
<feature type="compositionally biased region" description="Basic and acidic residues" evidence="6">
    <location>
        <begin position="33"/>
        <end position="49"/>
    </location>
</feature>
<feature type="compositionally biased region" description="Basic residues" evidence="6">
    <location>
        <begin position="87"/>
        <end position="101"/>
    </location>
</feature>
<feature type="compositionally biased region" description="Low complexity" evidence="6">
    <location>
        <begin position="182"/>
        <end position="195"/>
    </location>
</feature>
<feature type="compositionally biased region" description="Polar residues" evidence="6">
    <location>
        <begin position="196"/>
        <end position="213"/>
    </location>
</feature>
<feature type="compositionally biased region" description="Basic and acidic residues" evidence="6">
    <location>
        <begin position="264"/>
        <end position="273"/>
    </location>
</feature>
<feature type="compositionally biased region" description="Basic and acidic residues" evidence="6">
    <location>
        <begin position="355"/>
        <end position="365"/>
    </location>
</feature>
<feature type="compositionally biased region" description="Acidic residues" evidence="6">
    <location>
        <begin position="627"/>
        <end position="643"/>
    </location>
</feature>
<feature type="compositionally biased region" description="Basic and acidic residues" evidence="6">
    <location>
        <begin position="839"/>
        <end position="849"/>
    </location>
</feature>
<feature type="compositionally biased region" description="Polar residues" evidence="6">
    <location>
        <begin position="855"/>
        <end position="865"/>
    </location>
</feature>
<feature type="compositionally biased region" description="Polar residues" evidence="6">
    <location>
        <begin position="921"/>
        <end position="936"/>
    </location>
</feature>
<feature type="compositionally biased region" description="Basic and acidic residues" evidence="6">
    <location>
        <begin position="1051"/>
        <end position="1078"/>
    </location>
</feature>
<feature type="modified residue" description="Phosphoserine" evidence="2">
    <location>
        <position position="192"/>
    </location>
</feature>
<feature type="modified residue" description="Phosphothreonine" evidence="2">
    <location>
        <position position="312"/>
    </location>
</feature>
<feature type="modified residue" description="Phosphoserine" evidence="11">
    <location>
        <position position="338"/>
    </location>
</feature>
<feature type="modified residue" description="Phosphoserine" evidence="2">
    <location>
        <position position="371"/>
    </location>
</feature>
<feature type="modified residue" description="Phosphoserine; by PKA" evidence="2">
    <location>
        <position position="460"/>
    </location>
</feature>
<feature type="modified residue" description="Phosphoserine" evidence="12 13">
    <location>
        <position position="840"/>
    </location>
</feature>
<feature type="modified residue" description="Phosphoserine" evidence="2">
    <location>
        <position position="915"/>
    </location>
</feature>
<feature type="modified residue" description="Phosphoserine" evidence="2">
    <location>
        <position position="928"/>
    </location>
</feature>
<feature type="modified residue" description="Phosphoserine" evidence="2">
    <location>
        <position position="956"/>
    </location>
</feature>
<feature type="modified residue" description="Phosphoserine" evidence="2">
    <location>
        <position position="957"/>
    </location>
</feature>
<feature type="modified residue" description="Phosphoserine" evidence="2">
    <location>
        <position position="960"/>
    </location>
</feature>
<feature type="modified residue" description="Phosphoserine" evidence="2">
    <location>
        <position position="974"/>
    </location>
</feature>
<feature type="splice variant" id="VSP_011139" description="In isoform 2." evidence="8">
    <original>MLKTESSGERTTLRSASPHRNAYRTEFQALKSTFDKPKSDGEQKTKEGEGSQQSRGRKYGSNVNRIKNLFMQMGMEPNENAAVIAKTRGKGGHSSPQRRMKPKEFLEKTDGSVVKLESSVSERISRFDTMYDGPSYSKFTETRKMFERSVHESGQNNRYSPKKEKAGGSEPQDEWGGSKSNRGSTDSLDSLSSRTEAVSPTVSQLSAVFENTDSPSAIISEKAENNEYSVTGHYPLNLPSVTVTNLDTFGHLKDSNSWPPSNKRGVDTEDAHKSNATPVPEVASKSTSLASIPGEEIQQSKEPEDSTSNQQTPDSIDKDGPEEPCAESKAMPKSEIPSPQSQLLEDAEANLVGREAAKQQRKELAGGDFTSPDASASSCGKEVPEDSNNFDGSHVYMHSDYNVYRVRSRYNSDWGETGTEQDEEEDSDENSYYQPDMEYSEIVGLPEEEEIPANRKIKFSSAPIKVFNTYSNEDYDRRNDEVDPVAASAEYELEKRVEKLELFPVELEKDEDGLGISIIGMGVGADAGLEKLGIFVKTVTEGGAAQRDGRIQVNDQIVEVDGISLVGVTQNFAATVLRNTKGNVRFVIGREKPGQVSEVAQLISQTLEQERRQRELLEQHYAQYDADDDETGEYATDEEEDEVGPVLPGSDMAIEVFELPENEDMFSPSELDTSKLSHKFKELQIKHAVTEAEIQKLKTKLQAAENEKVRWELEKTQLQQNIEENKERMLKLESYWIEAQTLCHTVNEHLKETQSQYQALEKKYNKAKKLIKDFQQKELDFIKRQEAERKKIEDLEKAHLVEVQGLQVRIRDLEAEVFRLLKQNGTQVNNNNNIFERRTSLGEVSKGDTMENLDGKQTSCQDGLSQDLNEAVPETERLDSKALKTRAQLSVKNRRQRPSRTRLYDSVSSTDGEDSLER</original>
    <variation>MHITKLLPPKGLRTSSPESDSGVPPLTPVDSNVPFSSDHIAEFQEEPLDPEMGPLSSMWGDTSLFSTSKSDHDVEESPCHHQTTNKKILREKDDAKDPKSLRASSSLAVQGGKIKRKFVDLGAPLRRNSSKGKKWKEKEKEASRFSAGSRIFRGRLENWTPKPCSTAQTSTRSPCMPFSWFNDSRKGSYSFRNLPAPTSSLQPSPETLISDKKGS</variation>
    <location>
        <begin position="1"/>
        <end position="918"/>
    </location>
</feature>
<feature type="splice variant" id="VSP_044469" description="In isoform 3." evidence="9">
    <original>E</original>
    <variation>ENTVAELQGMSGNCNNNNNYFLK</variation>
    <location>
        <position position="630"/>
    </location>
</feature>
<feature type="splice variant" id="VSP_044470" description="In isoform 3." evidence="9">
    <original>K</original>
    <variation>KPSNSFYNHMHITKLLPPKGLRTSSPESDSGVPPLTPVDSNVPFSSDHIAEFQEEPLDPEMGPLSSMWGDTSLFSTSKSDHDVEESPCHHQTTNKKILREKDDAKDPKSLRASSSLAVQGGKIKRKFVDLGAPLRRNSSKGKKWKEKEKEASRFSAGSRIFRGRLENWTPKPCSTAQTSTRSPCMPFSWFNDSRKGSYSFRNLPAPTSSLQPSPETLISDKKGSKVENTWITKANKRNPNPSSSSIFGRHSQLMSVVWIQETN</variation>
    <location>
        <position position="919"/>
    </location>
</feature>
<feature type="splice variant" id="VSP_053808" description="In isoform 5." evidence="10">
    <original>K</original>
    <variation>KGLRTSSPESDSGVPPLTPVDSNVPFSSDHIAEFQEEPLDPEMGPLSSMWGDTSLFSTSKSDHDVEESPCHHQTTNKKILREKDDAKDPKSLRASSSLAVQGGKIKRKFVDLGAPLRRNSSKGKKWKEKEKEASRFSAGSRIFRGRLENWTPKPCSTAQTSTRSPCMPFSWFNDSRKGSYSFRNLPAPTSSLQPSPETLISDKKGSK</variation>
    <location>
        <position position="919"/>
    </location>
</feature>
<feature type="splice variant" id="VSP_044471" description="In isoform 4." evidence="9">
    <original>NFTFNDDFSPSSTSSADLSGLGAEPKTPGLSQSLALSSDESLDMIDDEILDDGQSPKHSQCQNRAVQEWSVQQVSHWLMSLNLEQYVSEFSAQNITGEQLLQLDGNKLK</original>
    <variation>PSNSFYNHMHITKLLPPKGLRTSSPESDSGVPPLTPVDSNVPFSSDHIAEFQEEPLDPEMGPLSSMWGDTSLFSTSKSDHDVEESPCHHQTTNKKILREKDDAKDPKSLRASSSLAVQGGKIKRKFVDLGAPLRRNSSKGKKWKEKEKEASRFSAGSRIFRGRLENWTPKPCSTAQTSTRSPCMPFSWFNDSRKGSYSFRNLPAPTSSLQPSPETLISDKKGSKNFTFNDDFSPSSTSSADLSGLGAEPKTPGLSQSLALSSDE</variation>
    <location>
        <begin position="920"/>
        <end position="1028"/>
    </location>
</feature>
<feature type="splice variant" id="VSP_005121" description="In isoform 2, isoform 3 and isoform 5." evidence="8 9">
    <location>
        <begin position="960"/>
        <end position="967"/>
    </location>
</feature>
<feature type="sequence variant" id="VAR_051746" description="In dbSNP:rs10230714." evidence="7">
    <original>M</original>
    <variation>V</variation>
    <location>
        <position position="331"/>
    </location>
</feature>
<feature type="sequence conflict" description="In Ref. 3; AAI50637." evidence="10" ref="3">
    <original>C</original>
    <variation>S</variation>
    <location>
        <position position="379"/>
    </location>
</feature>
<feature type="sequence conflict" description="In Ref. 1; BAA90928." evidence="10" ref="1">
    <original>S</original>
    <variation>P</variation>
    <location>
        <position position="952"/>
    </location>
</feature>
<feature type="strand" evidence="14">
    <location>
        <begin position="500"/>
        <end position="508"/>
    </location>
</feature>
<feature type="strand" evidence="14">
    <location>
        <begin position="516"/>
        <end position="524"/>
    </location>
</feature>
<feature type="strand" evidence="14">
    <location>
        <begin position="531"/>
        <end position="539"/>
    </location>
</feature>
<feature type="helix" evidence="14">
    <location>
        <begin position="544"/>
        <end position="548"/>
    </location>
</feature>
<feature type="strand" evidence="14">
    <location>
        <begin position="556"/>
        <end position="560"/>
    </location>
</feature>
<feature type="helix" evidence="14">
    <location>
        <begin position="570"/>
        <end position="579"/>
    </location>
</feature>
<feature type="strand" evidence="14">
    <location>
        <begin position="582"/>
        <end position="591"/>
    </location>
</feature>
<feature type="sequence conflict" description="In Ref. 3; AAI50637." evidence="10" ref="3">
    <original>R</original>
    <variation>Q</variation>
    <location sequence="Q9ULJ8-3">
        <position position="1039"/>
    </location>
</feature>
<feature type="sequence conflict" description="In Ref. 3; AAI30450." evidence="10" ref="3">
    <original>R</original>
    <variation>Q</variation>
    <location sequence="Q9ULJ8-4">
        <position position="1017"/>
    </location>
</feature>
<feature type="sequence conflict" description="In Ref. 3; AAI30450." evidence="10" ref="3">
    <original>S</original>
    <variation>N</variation>
    <location sequence="Q9ULJ8-4">
        <position position="1057"/>
    </location>
</feature>
<protein>
    <recommendedName>
        <fullName>Neurabin-1</fullName>
    </recommendedName>
    <alternativeName>
        <fullName>Neurabin-I</fullName>
    </alternativeName>
    <alternativeName>
        <fullName>Neural tissue-specific F-actin-binding protein I</fullName>
    </alternativeName>
    <alternativeName>
        <fullName>Protein phosphatase 1 regulatory subunit 9A</fullName>
    </alternativeName>
</protein>
<sequence>MLKTESSGERTTLRSASPHRNAYRTEFQALKSTFDKPKSDGEQKTKEGEGSQQSRGRKYGSNVNRIKNLFMQMGMEPNENAAVIAKTRGKGGHSSPQRRMKPKEFLEKTDGSVVKLESSVSERISRFDTMYDGPSYSKFTETRKMFERSVHESGQNNRYSPKKEKAGGSEPQDEWGGSKSNRGSTDSLDSLSSRTEAVSPTVSQLSAVFENTDSPSAIISEKAENNEYSVTGHYPLNLPSVTVTNLDTFGHLKDSNSWPPSNKRGVDTEDAHKSNATPVPEVASKSTSLASIPGEEIQQSKEPEDSTSNQQTPDSIDKDGPEEPCAESKAMPKSEIPSPQSQLLEDAEANLVGREAAKQQRKELAGGDFTSPDASASSCGKEVPEDSNNFDGSHVYMHSDYNVYRVRSRYNSDWGETGTEQDEEEDSDENSYYQPDMEYSEIVGLPEEEEIPANRKIKFSSAPIKVFNTYSNEDYDRRNDEVDPVAASAEYELEKRVEKLELFPVELEKDEDGLGISIIGMGVGADAGLEKLGIFVKTVTEGGAAQRDGRIQVNDQIVEVDGISLVGVTQNFAATVLRNTKGNVRFVIGREKPGQVSEVAQLISQTLEQERRQRELLEQHYAQYDADDDETGEYATDEEEDEVGPVLPGSDMAIEVFELPENEDMFSPSELDTSKLSHKFKELQIKHAVTEAEIQKLKTKLQAAENEKVRWELEKTQLQQNIEENKERMLKLESYWIEAQTLCHTVNEHLKETQSQYQALEKKYNKAKKLIKDFQQKELDFIKRQEAERKKIEDLEKAHLVEVQGLQVRIRDLEAEVFRLLKQNGTQVNNNNNIFERRTSLGEVSKGDTMENLDGKQTSCQDGLSQDLNEAVPETERLDSKALKTRAQLSVKNRRQRPSRTRLYDSVSSTDGEDSLERKNFTFNDDFSPSSTSSADLSGLGAEPKTPGLSQSLALSSDESLDMIDDEILDDGQSPKHSQCQNRAVQEWSVQQVSHWLMSLNLEQYVSEFSAQNITGEQLLQLDGNKLKALGMTASQDRAVVKKKLKEMKMSLEKARKAQEKMEKQREKLRRKEQEQMQRKSKKTEKMTSTTAEGAGEQ</sequence>
<name>NEB1_HUMAN</name>
<comment type="function">
    <text evidence="1">Binds to actin filaments (F-actin) and shows cross-linking activity. Binds along the sides of the F-actin. May be involved in neurite formation. Inhibits protein phosphatase 1-alpha activity (By similarity).</text>
</comment>
<comment type="subunit">
    <text evidence="1">Possibly exists as a homodimer, homotrimer or a homotetramer. Interacts with F-actin, protein phosphatase 1 (PP1), neurabin-2 and p70-S6K (By similarity).</text>
</comment>
<comment type="interaction">
    <interactant intactId="EBI-2515561">
        <id>Q9ULJ8</id>
    </interactant>
    <interactant intactId="EBI-712388">
        <id>P41220</id>
        <label>RGS2</label>
    </interactant>
    <organismsDiffer>false</organismsDiffer>
    <experiments>3</experiments>
</comment>
<comment type="subcellular location">
    <subcellularLocation>
        <location evidence="1">Cytoplasm</location>
        <location evidence="1">Cytoskeleton</location>
    </subcellularLocation>
    <subcellularLocation>
        <location evidence="1">Synapse</location>
        <location evidence="1">Synaptosome</location>
    </subcellularLocation>
</comment>
<comment type="alternative products">
    <event type="alternative splicing"/>
    <isoform>
        <id>Q9ULJ8-1</id>
        <name>1</name>
        <name>Long</name>
        <sequence type="displayed"/>
    </isoform>
    <isoform>
        <id>Q9ULJ8-2</id>
        <name>2</name>
        <name>Short</name>
        <sequence type="described" ref="VSP_011139 VSP_005121"/>
    </isoform>
    <isoform>
        <id>Q9ULJ8-3</id>
        <name>3</name>
        <sequence type="described" ref="VSP_044469 VSP_044470 VSP_005121"/>
    </isoform>
    <isoform>
        <id>Q9ULJ8-4</id>
        <name>4</name>
        <sequence type="described" ref="VSP_044471"/>
    </isoform>
    <isoform>
        <id>Q9ULJ8-5</id>
        <name>5</name>
        <sequence type="described" ref="VSP_053808 VSP_005121"/>
    </isoform>
</comment>
<comment type="domain">
    <text evidence="1">Interacts with p70-S6K via its PDZ domain.</text>
</comment>
<comment type="domain">
    <text evidence="1">The PP1 binding region is natively unstructured, upon PP1 binding, it acquires structure, blocks a substrate-binding site, and restricts PP1 phosphatase specificity to a subset of substrates.</text>
</comment>
<reference key="1">
    <citation type="journal article" date="2004" name="Nat. Genet.">
        <title>Complete sequencing and characterization of 21,243 full-length human cDNAs.</title>
        <authorList>
            <person name="Ota T."/>
            <person name="Suzuki Y."/>
            <person name="Nishikawa T."/>
            <person name="Otsuki T."/>
            <person name="Sugiyama T."/>
            <person name="Irie R."/>
            <person name="Wakamatsu A."/>
            <person name="Hayashi K."/>
            <person name="Sato H."/>
            <person name="Nagai K."/>
            <person name="Kimura K."/>
            <person name="Makita H."/>
            <person name="Sekine M."/>
            <person name="Obayashi M."/>
            <person name="Nishi T."/>
            <person name="Shibahara T."/>
            <person name="Tanaka T."/>
            <person name="Ishii S."/>
            <person name="Yamamoto J."/>
            <person name="Saito K."/>
            <person name="Kawai Y."/>
            <person name="Isono Y."/>
            <person name="Nakamura Y."/>
            <person name="Nagahari K."/>
            <person name="Murakami K."/>
            <person name="Yasuda T."/>
            <person name="Iwayanagi T."/>
            <person name="Wagatsuma M."/>
            <person name="Shiratori A."/>
            <person name="Sudo H."/>
            <person name="Hosoiri T."/>
            <person name="Kaku Y."/>
            <person name="Kodaira H."/>
            <person name="Kondo H."/>
            <person name="Sugawara M."/>
            <person name="Takahashi M."/>
            <person name="Kanda K."/>
            <person name="Yokoi T."/>
            <person name="Furuya T."/>
            <person name="Kikkawa E."/>
            <person name="Omura Y."/>
            <person name="Abe K."/>
            <person name="Kamihara K."/>
            <person name="Katsuta N."/>
            <person name="Sato K."/>
            <person name="Tanikawa M."/>
            <person name="Yamazaki M."/>
            <person name="Ninomiya K."/>
            <person name="Ishibashi T."/>
            <person name="Yamashita H."/>
            <person name="Murakawa K."/>
            <person name="Fujimori K."/>
            <person name="Tanai H."/>
            <person name="Kimata M."/>
            <person name="Watanabe M."/>
            <person name="Hiraoka S."/>
            <person name="Chiba Y."/>
            <person name="Ishida S."/>
            <person name="Ono Y."/>
            <person name="Takiguchi S."/>
            <person name="Watanabe S."/>
            <person name="Yosida M."/>
            <person name="Hotuta T."/>
            <person name="Kusano J."/>
            <person name="Kanehori K."/>
            <person name="Takahashi-Fujii A."/>
            <person name="Hara H."/>
            <person name="Tanase T.-O."/>
            <person name="Nomura Y."/>
            <person name="Togiya S."/>
            <person name="Komai F."/>
            <person name="Hara R."/>
            <person name="Takeuchi K."/>
            <person name="Arita M."/>
            <person name="Imose N."/>
            <person name="Musashino K."/>
            <person name="Yuuki H."/>
            <person name="Oshima A."/>
            <person name="Sasaki N."/>
            <person name="Aotsuka S."/>
            <person name="Yoshikawa Y."/>
            <person name="Matsunawa H."/>
            <person name="Ichihara T."/>
            <person name="Shiohata N."/>
            <person name="Sano S."/>
            <person name="Moriya S."/>
            <person name="Momiyama H."/>
            <person name="Satoh N."/>
            <person name="Takami S."/>
            <person name="Terashima Y."/>
            <person name="Suzuki O."/>
            <person name="Nakagawa S."/>
            <person name="Senoh A."/>
            <person name="Mizoguchi H."/>
            <person name="Goto Y."/>
            <person name="Shimizu F."/>
            <person name="Wakebe H."/>
            <person name="Hishigaki H."/>
            <person name="Watanabe T."/>
            <person name="Sugiyama A."/>
            <person name="Takemoto M."/>
            <person name="Kawakami B."/>
            <person name="Yamazaki M."/>
            <person name="Watanabe K."/>
            <person name="Kumagai A."/>
            <person name="Itakura S."/>
            <person name="Fukuzumi Y."/>
            <person name="Fujimori Y."/>
            <person name="Komiyama M."/>
            <person name="Tashiro H."/>
            <person name="Tanigami A."/>
            <person name="Fujiwara T."/>
            <person name="Ono T."/>
            <person name="Yamada K."/>
            <person name="Fujii Y."/>
            <person name="Ozaki K."/>
            <person name="Hirao M."/>
            <person name="Ohmori Y."/>
            <person name="Kawabata A."/>
            <person name="Hikiji T."/>
            <person name="Kobatake N."/>
            <person name="Inagaki H."/>
            <person name="Ikema Y."/>
            <person name="Okamoto S."/>
            <person name="Okitani R."/>
            <person name="Kawakami T."/>
            <person name="Noguchi S."/>
            <person name="Itoh T."/>
            <person name="Shigeta K."/>
            <person name="Senba T."/>
            <person name="Matsumura K."/>
            <person name="Nakajima Y."/>
            <person name="Mizuno T."/>
            <person name="Morinaga M."/>
            <person name="Sasaki M."/>
            <person name="Togashi T."/>
            <person name="Oyama M."/>
            <person name="Hata H."/>
            <person name="Watanabe M."/>
            <person name="Komatsu T."/>
            <person name="Mizushima-Sugano J."/>
            <person name="Satoh T."/>
            <person name="Shirai Y."/>
            <person name="Takahashi Y."/>
            <person name="Nakagawa K."/>
            <person name="Okumura K."/>
            <person name="Nagase T."/>
            <person name="Nomura N."/>
            <person name="Kikuchi H."/>
            <person name="Masuho Y."/>
            <person name="Yamashita R."/>
            <person name="Nakai K."/>
            <person name="Yada T."/>
            <person name="Nakamura Y."/>
            <person name="Ohara O."/>
            <person name="Isogai T."/>
            <person name="Sugano S."/>
        </authorList>
    </citation>
    <scope>NUCLEOTIDE SEQUENCE [LARGE SCALE MRNA] (ISOFORM 2)</scope>
    <source>
        <tissue>Colon</tissue>
    </source>
</reference>
<reference key="2">
    <citation type="journal article" date="2003" name="Nature">
        <title>The DNA sequence of human chromosome 7.</title>
        <authorList>
            <person name="Hillier L.W."/>
            <person name="Fulton R.S."/>
            <person name="Fulton L.A."/>
            <person name="Graves T.A."/>
            <person name="Pepin K.H."/>
            <person name="Wagner-McPherson C."/>
            <person name="Layman D."/>
            <person name="Maas J."/>
            <person name="Jaeger S."/>
            <person name="Walker R."/>
            <person name="Wylie K."/>
            <person name="Sekhon M."/>
            <person name="Becker M.C."/>
            <person name="O'Laughlin M.D."/>
            <person name="Schaller M.E."/>
            <person name="Fewell G.A."/>
            <person name="Delehaunty K.D."/>
            <person name="Miner T.L."/>
            <person name="Nash W.E."/>
            <person name="Cordes M."/>
            <person name="Du H."/>
            <person name="Sun H."/>
            <person name="Edwards J."/>
            <person name="Bradshaw-Cordum H."/>
            <person name="Ali J."/>
            <person name="Andrews S."/>
            <person name="Isak A."/>
            <person name="Vanbrunt A."/>
            <person name="Nguyen C."/>
            <person name="Du F."/>
            <person name="Lamar B."/>
            <person name="Courtney L."/>
            <person name="Kalicki J."/>
            <person name="Ozersky P."/>
            <person name="Bielicki L."/>
            <person name="Scott K."/>
            <person name="Holmes A."/>
            <person name="Harkins R."/>
            <person name="Harris A."/>
            <person name="Strong C.M."/>
            <person name="Hou S."/>
            <person name="Tomlinson C."/>
            <person name="Dauphin-Kohlberg S."/>
            <person name="Kozlowicz-Reilly A."/>
            <person name="Leonard S."/>
            <person name="Rohlfing T."/>
            <person name="Rock S.M."/>
            <person name="Tin-Wollam A.-M."/>
            <person name="Abbott A."/>
            <person name="Minx P."/>
            <person name="Maupin R."/>
            <person name="Strowmatt C."/>
            <person name="Latreille P."/>
            <person name="Miller N."/>
            <person name="Johnson D."/>
            <person name="Murray J."/>
            <person name="Woessner J.P."/>
            <person name="Wendl M.C."/>
            <person name="Yang S.-P."/>
            <person name="Schultz B.R."/>
            <person name="Wallis J.W."/>
            <person name="Spieth J."/>
            <person name="Bieri T.A."/>
            <person name="Nelson J.O."/>
            <person name="Berkowicz N."/>
            <person name="Wohldmann P.E."/>
            <person name="Cook L.L."/>
            <person name="Hickenbotham M.T."/>
            <person name="Eldred J."/>
            <person name="Williams D."/>
            <person name="Bedell J.A."/>
            <person name="Mardis E.R."/>
            <person name="Clifton S.W."/>
            <person name="Chissoe S.L."/>
            <person name="Marra M.A."/>
            <person name="Raymond C."/>
            <person name="Haugen E."/>
            <person name="Gillett W."/>
            <person name="Zhou Y."/>
            <person name="James R."/>
            <person name="Phelps K."/>
            <person name="Iadanoto S."/>
            <person name="Bubb K."/>
            <person name="Simms E."/>
            <person name="Levy R."/>
            <person name="Clendenning J."/>
            <person name="Kaul R."/>
            <person name="Kent W.J."/>
            <person name="Furey T.S."/>
            <person name="Baertsch R.A."/>
            <person name="Brent M.R."/>
            <person name="Keibler E."/>
            <person name="Flicek P."/>
            <person name="Bork P."/>
            <person name="Suyama M."/>
            <person name="Bailey J.A."/>
            <person name="Portnoy M.E."/>
            <person name="Torrents D."/>
            <person name="Chinwalla A.T."/>
            <person name="Gish W.R."/>
            <person name="Eddy S.R."/>
            <person name="McPherson J.D."/>
            <person name="Olson M.V."/>
            <person name="Eichler E.E."/>
            <person name="Green E.D."/>
            <person name="Waterston R.H."/>
            <person name="Wilson R.K."/>
        </authorList>
    </citation>
    <scope>NUCLEOTIDE SEQUENCE [LARGE SCALE GENOMIC DNA]</scope>
</reference>
<reference key="3">
    <citation type="journal article" date="2004" name="Genome Res.">
        <title>The status, quality, and expansion of the NIH full-length cDNA project: the Mammalian Gene Collection (MGC).</title>
        <authorList>
            <consortium name="The MGC Project Team"/>
        </authorList>
    </citation>
    <scope>NUCLEOTIDE SEQUENCE [LARGE SCALE MRNA] (ISOFORMS 3 AND 4)</scope>
    <scope>VARIANT VAL-331</scope>
</reference>
<reference key="4">
    <citation type="journal article" date="1999" name="DNA Res.">
        <title>Prediction of the coding sequences of unidentified human genes. XV. The complete sequences of 100 new cDNA clones from brain which code for large proteins in vitro.</title>
        <authorList>
            <person name="Nagase T."/>
            <person name="Ishikawa K."/>
            <person name="Kikuno R."/>
            <person name="Hirosawa M."/>
            <person name="Nomura N."/>
            <person name="Ohara O."/>
        </authorList>
    </citation>
    <scope>NUCLEOTIDE SEQUENCE [LARGE SCALE MRNA] OF 357-1098 (ISOFORM 1)</scope>
    <source>
        <tissue>Brain</tissue>
    </source>
</reference>
<reference key="5">
    <citation type="journal article" date="2008" name="Proc. Natl. Acad. Sci. U.S.A.">
        <title>A quantitative atlas of mitotic phosphorylation.</title>
        <authorList>
            <person name="Dephoure N."/>
            <person name="Zhou C."/>
            <person name="Villen J."/>
            <person name="Beausoleil S.A."/>
            <person name="Bakalarski C.E."/>
            <person name="Elledge S.J."/>
            <person name="Gygi S.P."/>
        </authorList>
    </citation>
    <scope>PHOSPHORYLATION [LARGE SCALE ANALYSIS] AT SER-338</scope>
    <scope>IDENTIFICATION BY MASS SPECTROMETRY [LARGE SCALE ANALYSIS]</scope>
    <source>
        <tissue>Cervix carcinoma</tissue>
    </source>
</reference>
<reference key="6">
    <citation type="journal article" date="2010" name="Sci. Signal.">
        <title>Quantitative phosphoproteomics reveals widespread full phosphorylation site occupancy during mitosis.</title>
        <authorList>
            <person name="Olsen J.V."/>
            <person name="Vermeulen M."/>
            <person name="Santamaria A."/>
            <person name="Kumar C."/>
            <person name="Miller M.L."/>
            <person name="Jensen L.J."/>
            <person name="Gnad F."/>
            <person name="Cox J."/>
            <person name="Jensen T.S."/>
            <person name="Nigg E.A."/>
            <person name="Brunak S."/>
            <person name="Mann M."/>
        </authorList>
    </citation>
    <scope>IDENTIFICATION BY MASS SPECTROMETRY [LARGE SCALE ANALYSIS]</scope>
    <source>
        <tissue>Cervix carcinoma</tissue>
    </source>
</reference>
<reference key="7">
    <citation type="journal article" date="2011" name="Sci. Signal.">
        <title>System-wide temporal characterization of the proteome and phosphoproteome of human embryonic stem cell differentiation.</title>
        <authorList>
            <person name="Rigbolt K.T."/>
            <person name="Prokhorova T.A."/>
            <person name="Akimov V."/>
            <person name="Henningsen J."/>
            <person name="Johansen P.T."/>
            <person name="Kratchmarova I."/>
            <person name="Kassem M."/>
            <person name="Mann M."/>
            <person name="Olsen J.V."/>
            <person name="Blagoev B."/>
        </authorList>
    </citation>
    <scope>PHOSPHORYLATION [LARGE SCALE ANALYSIS] AT SER-840</scope>
    <scope>IDENTIFICATION BY MASS SPECTROMETRY [LARGE SCALE ANALYSIS]</scope>
</reference>
<reference key="8">
    <citation type="journal article" date="2013" name="J. Proteome Res.">
        <title>Toward a comprehensive characterization of a human cancer cell phosphoproteome.</title>
        <authorList>
            <person name="Zhou H."/>
            <person name="Di Palma S."/>
            <person name="Preisinger C."/>
            <person name="Peng M."/>
            <person name="Polat A.N."/>
            <person name="Heck A.J."/>
            <person name="Mohammed S."/>
        </authorList>
    </citation>
    <scope>PHOSPHORYLATION [LARGE SCALE ANALYSIS] AT SER-840</scope>
    <scope>IDENTIFICATION BY MASS SPECTROMETRY [LARGE SCALE ANALYSIS]</scope>
    <source>
        <tissue>Cervix carcinoma</tissue>
    </source>
</reference>
<reference key="9">
    <citation type="submission" date="2005-06" db="PDB data bank">
        <title>Solution structure of the PDZ domain of spinophilin/neurabinII protein.</title>
        <authorList>
            <consortium name="RIKEN structural genomics initiative (RSGI)"/>
        </authorList>
    </citation>
    <scope>STRUCTURE BY NMR OF 500-593</scope>
</reference>